<accession>Q9E6N7</accession>
<comment type="function">
    <text evidence="1">Plays a role in efficient localization of neo-synthesized capsids to nuclear replication compartments, thereby controlling cleavage and packaging of virus genomic DNA.</text>
</comment>
<comment type="subcellular location">
    <subcellularLocation>
        <location>Host cytoplasm</location>
    </subcellularLocation>
    <subcellularLocation>
        <location evidence="1">Host nucleus</location>
    </subcellularLocation>
</comment>
<comment type="similarity">
    <text evidence="3">Belongs to the herpesviridae UL32 protein family.</text>
</comment>
<reference key="1">
    <citation type="journal article" date="2000" name="J. Virol.">
        <title>The genome of a very virulent Marek's disease virus.</title>
        <authorList>
            <person name="Tulman E.R."/>
            <person name="Afonso C.L."/>
            <person name="Lu Z."/>
            <person name="Zsak L."/>
            <person name="Rock D.L."/>
            <person name="Kutish G.F."/>
        </authorList>
    </citation>
    <scope>NUCLEOTIDE SEQUENCE [LARGE SCALE GENOMIC DNA]</scope>
</reference>
<name>UL32_GAHVM</name>
<organismHost>
    <name type="scientific">Gallus gallus</name>
    <name type="common">Chicken</name>
    <dbReference type="NCBI Taxonomy" id="9031"/>
</organismHost>
<keyword id="KW-1035">Host cytoplasm</keyword>
<keyword id="KW-1048">Host nucleus</keyword>
<keyword id="KW-0479">Metal-binding</keyword>
<keyword id="KW-1185">Reference proteome</keyword>
<keyword id="KW-0862">Zinc</keyword>
<keyword id="KW-0863">Zinc-finger</keyword>
<evidence type="ECO:0000250" key="1"/>
<evidence type="ECO:0000255" key="2">
    <source>
        <dbReference type="PROSITE-ProRule" id="PRU01332"/>
    </source>
</evidence>
<evidence type="ECO:0000305" key="3"/>
<proteinExistence type="inferred from homology"/>
<gene>
    <name type="primary">MDV046</name>
</gene>
<dbReference type="EMBL" id="AF243438">
    <property type="protein sequence ID" value="AAG14226.1"/>
    <property type="molecule type" value="Genomic_DNA"/>
</dbReference>
<dbReference type="RefSeq" id="YP_001033961.1">
    <property type="nucleotide sequence ID" value="NC_002229.3"/>
</dbReference>
<dbReference type="GeneID" id="4811506"/>
<dbReference type="KEGG" id="vg:4811506"/>
<dbReference type="Proteomes" id="UP000008072">
    <property type="component" value="Segment"/>
</dbReference>
<dbReference type="GO" id="GO:0030430">
    <property type="term" value="C:host cell cytoplasm"/>
    <property type="evidence" value="ECO:0007669"/>
    <property type="project" value="UniProtKB-SubCell"/>
</dbReference>
<dbReference type="GO" id="GO:0042025">
    <property type="term" value="C:host cell nucleus"/>
    <property type="evidence" value="ECO:0007669"/>
    <property type="project" value="UniProtKB-SubCell"/>
</dbReference>
<dbReference type="GO" id="GO:0019031">
    <property type="term" value="C:viral envelope"/>
    <property type="evidence" value="ECO:0007669"/>
    <property type="project" value="InterPro"/>
</dbReference>
<dbReference type="GO" id="GO:0008270">
    <property type="term" value="F:zinc ion binding"/>
    <property type="evidence" value="ECO:0007669"/>
    <property type="project" value="UniProtKB-KW"/>
</dbReference>
<dbReference type="InterPro" id="IPR002597">
    <property type="entry name" value="Herpes_env"/>
</dbReference>
<dbReference type="Pfam" id="PF01673">
    <property type="entry name" value="Herpes_env"/>
    <property type="match status" value="1"/>
</dbReference>
<dbReference type="PROSITE" id="PS51988">
    <property type="entry name" value="HERPESVIRUS_UL32"/>
    <property type="match status" value="1"/>
</dbReference>
<organism>
    <name type="scientific">Gallid herpesvirus 2 (strain Chicken/Md5/ATCC VR-987)</name>
    <name type="common">GaHV-2</name>
    <name type="synonym">Marek's disease herpesvirus type 1</name>
    <dbReference type="NCBI Taxonomy" id="10389"/>
    <lineage>
        <taxon>Viruses</taxon>
        <taxon>Duplodnaviria</taxon>
        <taxon>Heunggongvirae</taxon>
        <taxon>Peploviricota</taxon>
        <taxon>Herviviricetes</taxon>
        <taxon>Herpesvirales</taxon>
        <taxon>Orthoherpesviridae</taxon>
        <taxon>Alphaherpesvirinae</taxon>
        <taxon>Mardivirus</taxon>
        <taxon>Mardivirus gallidalpha2</taxon>
        <taxon>Gallid alphaherpesvirus 2</taxon>
    </lineage>
</organism>
<feature type="chain" id="PRO_0000406526" description="Packaging protein UL32 homolog">
    <location>
        <begin position="1"/>
        <end position="641"/>
    </location>
</feature>
<feature type="region of interest" description="Zinc finger 1" evidence="2">
    <location>
        <begin position="101"/>
        <end position="187"/>
    </location>
</feature>
<feature type="region of interest" description="Zinc finger 2" evidence="2">
    <location>
        <begin position="467"/>
        <end position="547"/>
    </location>
</feature>
<feature type="binding site" evidence="2">
    <location>
        <position position="101"/>
    </location>
    <ligand>
        <name>Zn(2+)</name>
        <dbReference type="ChEBI" id="CHEBI:29105"/>
        <label>1</label>
    </ligand>
</feature>
<feature type="binding site" evidence="2">
    <location>
        <position position="104"/>
    </location>
    <ligand>
        <name>Zn(2+)</name>
        <dbReference type="ChEBI" id="CHEBI:29105"/>
        <label>1</label>
    </ligand>
</feature>
<feature type="binding site" evidence="2">
    <location>
        <position position="181"/>
    </location>
    <ligand>
        <name>Zn(2+)</name>
        <dbReference type="ChEBI" id="CHEBI:29105"/>
        <label>1</label>
    </ligand>
</feature>
<feature type="binding site" evidence="2">
    <location>
        <position position="187"/>
    </location>
    <ligand>
        <name>Zn(2+)</name>
        <dbReference type="ChEBI" id="CHEBI:29105"/>
        <label>1</label>
    </ligand>
</feature>
<feature type="binding site" evidence="2">
    <location>
        <position position="467"/>
    </location>
    <ligand>
        <name>Zn(2+)</name>
        <dbReference type="ChEBI" id="CHEBI:29105"/>
        <label>2</label>
    </ligand>
</feature>
<feature type="binding site" evidence="2">
    <location>
        <position position="470"/>
    </location>
    <ligand>
        <name>Zn(2+)</name>
        <dbReference type="ChEBI" id="CHEBI:29105"/>
        <label>2</label>
    </ligand>
</feature>
<feature type="binding site" evidence="2">
    <location>
        <position position="540"/>
    </location>
    <ligand>
        <name>Zn(2+)</name>
        <dbReference type="ChEBI" id="CHEBI:29105"/>
        <label>2</label>
    </ligand>
</feature>
<feature type="binding site" evidence="2">
    <location>
        <position position="547"/>
    </location>
    <ligand>
        <name>Zn(2+)</name>
        <dbReference type="ChEBI" id="CHEBI:29105"/>
        <label>2</label>
    </ligand>
</feature>
<protein>
    <recommendedName>
        <fullName>Packaging protein UL32 homolog</fullName>
    </recommendedName>
</protein>
<sequence length="641" mass="71550">MANRPTELAAFIRSSGEADGWIEESFKEPYVAFNPDVLMYNDTLFNELLLSAHALKINSIQDVQSDDTVEDAGDIGNEVIHSELVTFIETAADVYALDRQCLVCRVLDMYRRNFGLSALWMADYAFLCSKCLGSPPCATATFIAAFEFVYIMDKHFLSDHGCTLVRSFGKKLLTLEDIQRHFFLHGCFRTDGGVPGRRHDEVITSRSKQGRLVGRRGKFSTAGDAKVLYSNYSYLAQSATRALLMTLSDLGSAPLEVIEGRQKSISGDVRNELRDGIESRKRVAHVIHSVGPVHSCPTTLSVALAGWKDCAKNVECNFFQLESCTLRASSEDNDYEHEWELRASEEKLNVVENVQDMQQIDASQCEHHEHARNEDCTMGYGNLVLLLLAGTGSAPEAASELAFMAAKVRRETVDIFWKNHRREFANDVTAAYSACYGEDSEPDLELGPLMITQLKHAITKGGTSAECLLCNLLLIRTYWLAMRKFKRDIITYSANNIGLFHSIEPVLDAWRSQGHRTDLGDEGCFVTLMKSAGTEAIYKHLFCDPMCAARIAQTNPRSLFDHPDATNHDELALYKARLASQNHFEGRVCAGLWALAYTFKTYQVFPPRPTALSAFVKDAGALLQRHSISLISLEHTLGVYV</sequence>